<organism>
    <name type="scientific">Mycobacterium marinum (strain ATCC BAA-535 / M)</name>
    <dbReference type="NCBI Taxonomy" id="216594"/>
    <lineage>
        <taxon>Bacteria</taxon>
        <taxon>Bacillati</taxon>
        <taxon>Actinomycetota</taxon>
        <taxon>Actinomycetes</taxon>
        <taxon>Mycobacteriales</taxon>
        <taxon>Mycobacteriaceae</taxon>
        <taxon>Mycobacterium</taxon>
        <taxon>Mycobacterium ulcerans group</taxon>
    </lineage>
</organism>
<name>DNLJ_MYCMM</name>
<comment type="function">
    <text evidence="1">DNA ligase that catalyzes the formation of phosphodiester linkages between 5'-phosphoryl and 3'-hydroxyl groups in double-stranded DNA using NAD as a coenzyme and as the energy source for the reaction. It is essential for DNA replication and repair of damaged DNA.</text>
</comment>
<comment type="catalytic activity">
    <reaction evidence="1">
        <text>NAD(+) + (deoxyribonucleotide)n-3'-hydroxyl + 5'-phospho-(deoxyribonucleotide)m = (deoxyribonucleotide)n+m + AMP + beta-nicotinamide D-nucleotide.</text>
        <dbReference type="EC" id="6.5.1.2"/>
    </reaction>
</comment>
<comment type="cofactor">
    <cofactor evidence="1">
        <name>Mg(2+)</name>
        <dbReference type="ChEBI" id="CHEBI:18420"/>
    </cofactor>
    <cofactor evidence="1">
        <name>Mn(2+)</name>
        <dbReference type="ChEBI" id="CHEBI:29035"/>
    </cofactor>
</comment>
<comment type="similarity">
    <text evidence="1">Belongs to the NAD-dependent DNA ligase family. LigA subfamily.</text>
</comment>
<sequence>MTPEVLRQWQELAEQVREHQFRYYVRDAPVITDAEFDELLRRLEALEEQYPELRTPDSPTQLVGGAGFATEFEPVEHLERMLSLDNAFNTEELTAWAGRIHADVGDSAAYLCELKIDGVALSLVYEGGRLTRASTRGDGRTGEDVTLNARTIEDVPERLSHSEDHRMPEVLEVRGEVFFRVADFQALNASLVEEGKAPFANPRNSAAGSLRQKDPAVTARRRLRMICHGLGHTEGFRPATLHQAYLALQAWGLPVSQHTTLVADLAGVQERIDYWGEHRHEVDHEIDGVVVKVDDVALQRRLGSTSRAPRWAIAYKYPPEEAQTKLLDIRVNVGRTGRVTPFAFMTPVKVAGSTVAQATLHNASEVKRKGVLIGDTVVIRKAGDVIPEVLGPVVDLRDGSEREFVMPTTCPECGTPLAPEKEGDADIRCPNTRSCPGQLRERVFHVSSRNALDIEMLGYEAGAALLSARVIGDEGDLFGLTEEELLRTDLFRTKAGDLSANGRRLLANLDKAKAAPLWRVLVALSIRHVGPTAARALATEFGSIDAIVSATTEQLAAVEGVGPTIASAVSEWFTVDWHREIVEKWRAAGVRMADERDDSVPRTLAGVTVVVTGSLPGFSRDEAKEAIVTRGGKAAGSVSKKTSYVVAGDAPGSKYDKAVELGVPILDEDGFRKLLEQGPPAEVGEPT</sequence>
<protein>
    <recommendedName>
        <fullName evidence="1">DNA ligase</fullName>
        <ecNumber evidence="1">6.5.1.2</ecNumber>
    </recommendedName>
    <alternativeName>
        <fullName evidence="1">Polydeoxyribonucleotide synthase [NAD(+)]</fullName>
    </alternativeName>
</protein>
<dbReference type="EC" id="6.5.1.2" evidence="1"/>
<dbReference type="EMBL" id="CP000854">
    <property type="protein sequence ID" value="ACC40144.1"/>
    <property type="molecule type" value="Genomic_DNA"/>
</dbReference>
<dbReference type="RefSeq" id="WP_012393515.1">
    <property type="nucleotide sequence ID" value="NC_010612.1"/>
</dbReference>
<dbReference type="SMR" id="B2HIF0"/>
<dbReference type="STRING" id="216594.MMAR_1694"/>
<dbReference type="KEGG" id="mmi:MMAR_1694"/>
<dbReference type="eggNOG" id="COG0272">
    <property type="taxonomic scope" value="Bacteria"/>
</dbReference>
<dbReference type="HOGENOM" id="CLU_007764_2_0_11"/>
<dbReference type="OrthoDB" id="9759736at2"/>
<dbReference type="Proteomes" id="UP000001190">
    <property type="component" value="Chromosome"/>
</dbReference>
<dbReference type="GO" id="GO:0005829">
    <property type="term" value="C:cytosol"/>
    <property type="evidence" value="ECO:0007669"/>
    <property type="project" value="TreeGrafter"/>
</dbReference>
<dbReference type="GO" id="GO:0003911">
    <property type="term" value="F:DNA ligase (NAD+) activity"/>
    <property type="evidence" value="ECO:0007669"/>
    <property type="project" value="UniProtKB-UniRule"/>
</dbReference>
<dbReference type="GO" id="GO:0046872">
    <property type="term" value="F:metal ion binding"/>
    <property type="evidence" value="ECO:0007669"/>
    <property type="project" value="UniProtKB-KW"/>
</dbReference>
<dbReference type="GO" id="GO:0006281">
    <property type="term" value="P:DNA repair"/>
    <property type="evidence" value="ECO:0007669"/>
    <property type="project" value="UniProtKB-KW"/>
</dbReference>
<dbReference type="GO" id="GO:0006260">
    <property type="term" value="P:DNA replication"/>
    <property type="evidence" value="ECO:0007669"/>
    <property type="project" value="UniProtKB-KW"/>
</dbReference>
<dbReference type="CDD" id="cd17748">
    <property type="entry name" value="BRCT_DNA_ligase_like"/>
    <property type="match status" value="1"/>
</dbReference>
<dbReference type="CDD" id="cd00114">
    <property type="entry name" value="LIGANc"/>
    <property type="match status" value="1"/>
</dbReference>
<dbReference type="FunFam" id="1.10.150.20:FF:000006">
    <property type="entry name" value="DNA ligase"/>
    <property type="match status" value="1"/>
</dbReference>
<dbReference type="FunFam" id="1.10.287.610:FF:000002">
    <property type="entry name" value="DNA ligase"/>
    <property type="match status" value="1"/>
</dbReference>
<dbReference type="FunFam" id="2.40.50.140:FF:000012">
    <property type="entry name" value="DNA ligase"/>
    <property type="match status" value="1"/>
</dbReference>
<dbReference type="FunFam" id="3.30.470.30:FF:000001">
    <property type="entry name" value="DNA ligase"/>
    <property type="match status" value="1"/>
</dbReference>
<dbReference type="FunFam" id="3.40.50.10190:FF:000054">
    <property type="entry name" value="DNA ligase"/>
    <property type="match status" value="1"/>
</dbReference>
<dbReference type="Gene3D" id="6.20.10.30">
    <property type="match status" value="1"/>
</dbReference>
<dbReference type="Gene3D" id="1.10.150.20">
    <property type="entry name" value="5' to 3' exonuclease, C-terminal subdomain"/>
    <property type="match status" value="2"/>
</dbReference>
<dbReference type="Gene3D" id="3.40.50.10190">
    <property type="entry name" value="BRCT domain"/>
    <property type="match status" value="1"/>
</dbReference>
<dbReference type="Gene3D" id="3.30.470.30">
    <property type="entry name" value="DNA ligase/mRNA capping enzyme"/>
    <property type="match status" value="1"/>
</dbReference>
<dbReference type="Gene3D" id="1.10.287.610">
    <property type="entry name" value="Helix hairpin bin"/>
    <property type="match status" value="1"/>
</dbReference>
<dbReference type="Gene3D" id="2.40.50.140">
    <property type="entry name" value="Nucleic acid-binding proteins"/>
    <property type="match status" value="1"/>
</dbReference>
<dbReference type="HAMAP" id="MF_01588">
    <property type="entry name" value="DNA_ligase_A"/>
    <property type="match status" value="1"/>
</dbReference>
<dbReference type="InterPro" id="IPR001357">
    <property type="entry name" value="BRCT_dom"/>
</dbReference>
<dbReference type="InterPro" id="IPR036420">
    <property type="entry name" value="BRCT_dom_sf"/>
</dbReference>
<dbReference type="InterPro" id="IPR041663">
    <property type="entry name" value="DisA/LigA_HHH"/>
</dbReference>
<dbReference type="InterPro" id="IPR001679">
    <property type="entry name" value="DNA_ligase"/>
</dbReference>
<dbReference type="InterPro" id="IPR018239">
    <property type="entry name" value="DNA_ligase_AS"/>
</dbReference>
<dbReference type="InterPro" id="IPR033136">
    <property type="entry name" value="DNA_ligase_CS"/>
</dbReference>
<dbReference type="InterPro" id="IPR013839">
    <property type="entry name" value="DNAligase_adenylation"/>
</dbReference>
<dbReference type="InterPro" id="IPR013840">
    <property type="entry name" value="DNAligase_N"/>
</dbReference>
<dbReference type="InterPro" id="IPR012340">
    <property type="entry name" value="NA-bd_OB-fold"/>
</dbReference>
<dbReference type="InterPro" id="IPR004150">
    <property type="entry name" value="NAD_DNA_ligase_OB"/>
</dbReference>
<dbReference type="InterPro" id="IPR010994">
    <property type="entry name" value="RuvA_2-like"/>
</dbReference>
<dbReference type="InterPro" id="IPR004149">
    <property type="entry name" value="Znf_DNAligase_C4"/>
</dbReference>
<dbReference type="NCBIfam" id="TIGR00575">
    <property type="entry name" value="dnlj"/>
    <property type="match status" value="1"/>
</dbReference>
<dbReference type="NCBIfam" id="NF005932">
    <property type="entry name" value="PRK07956.1"/>
    <property type="match status" value="1"/>
</dbReference>
<dbReference type="PANTHER" id="PTHR23389">
    <property type="entry name" value="CHROMOSOME TRANSMISSION FIDELITY FACTOR 18"/>
    <property type="match status" value="1"/>
</dbReference>
<dbReference type="PANTHER" id="PTHR23389:SF9">
    <property type="entry name" value="DNA LIGASE"/>
    <property type="match status" value="1"/>
</dbReference>
<dbReference type="Pfam" id="PF00533">
    <property type="entry name" value="BRCT"/>
    <property type="match status" value="1"/>
</dbReference>
<dbReference type="Pfam" id="PF01653">
    <property type="entry name" value="DNA_ligase_aden"/>
    <property type="match status" value="1"/>
</dbReference>
<dbReference type="Pfam" id="PF03120">
    <property type="entry name" value="DNA_ligase_OB"/>
    <property type="match status" value="1"/>
</dbReference>
<dbReference type="Pfam" id="PF03119">
    <property type="entry name" value="DNA_ligase_ZBD"/>
    <property type="match status" value="1"/>
</dbReference>
<dbReference type="Pfam" id="PF12826">
    <property type="entry name" value="HHH_2"/>
    <property type="match status" value="1"/>
</dbReference>
<dbReference type="Pfam" id="PF22745">
    <property type="entry name" value="Nlig-Ia"/>
    <property type="match status" value="1"/>
</dbReference>
<dbReference type="PIRSF" id="PIRSF001604">
    <property type="entry name" value="LigA"/>
    <property type="match status" value="1"/>
</dbReference>
<dbReference type="SMART" id="SM00292">
    <property type="entry name" value="BRCT"/>
    <property type="match status" value="1"/>
</dbReference>
<dbReference type="SMART" id="SM00532">
    <property type="entry name" value="LIGANc"/>
    <property type="match status" value="1"/>
</dbReference>
<dbReference type="SUPFAM" id="SSF52113">
    <property type="entry name" value="BRCT domain"/>
    <property type="match status" value="1"/>
</dbReference>
<dbReference type="SUPFAM" id="SSF56091">
    <property type="entry name" value="DNA ligase/mRNA capping enzyme, catalytic domain"/>
    <property type="match status" value="1"/>
</dbReference>
<dbReference type="SUPFAM" id="SSF50249">
    <property type="entry name" value="Nucleic acid-binding proteins"/>
    <property type="match status" value="1"/>
</dbReference>
<dbReference type="SUPFAM" id="SSF47781">
    <property type="entry name" value="RuvA domain 2-like"/>
    <property type="match status" value="1"/>
</dbReference>
<dbReference type="PROSITE" id="PS50172">
    <property type="entry name" value="BRCT"/>
    <property type="match status" value="1"/>
</dbReference>
<dbReference type="PROSITE" id="PS01055">
    <property type="entry name" value="DNA_LIGASE_N1"/>
    <property type="match status" value="1"/>
</dbReference>
<dbReference type="PROSITE" id="PS01056">
    <property type="entry name" value="DNA_LIGASE_N2"/>
    <property type="match status" value="1"/>
</dbReference>
<feature type="chain" id="PRO_0000380428" description="DNA ligase">
    <location>
        <begin position="1"/>
        <end position="687"/>
    </location>
</feature>
<feature type="domain" description="BRCT" evidence="1">
    <location>
        <begin position="599"/>
        <end position="687"/>
    </location>
</feature>
<feature type="active site" description="N6-AMP-lysine intermediate" evidence="1">
    <location>
        <position position="115"/>
    </location>
</feature>
<feature type="binding site" evidence="1">
    <location>
        <begin position="33"/>
        <end position="37"/>
    </location>
    <ligand>
        <name>NAD(+)</name>
        <dbReference type="ChEBI" id="CHEBI:57540"/>
    </ligand>
</feature>
<feature type="binding site" evidence="1">
    <location>
        <begin position="83"/>
        <end position="84"/>
    </location>
    <ligand>
        <name>NAD(+)</name>
        <dbReference type="ChEBI" id="CHEBI:57540"/>
    </ligand>
</feature>
<feature type="binding site" evidence="1">
    <location>
        <position position="113"/>
    </location>
    <ligand>
        <name>NAD(+)</name>
        <dbReference type="ChEBI" id="CHEBI:57540"/>
    </ligand>
</feature>
<feature type="binding site" evidence="1">
    <location>
        <position position="136"/>
    </location>
    <ligand>
        <name>NAD(+)</name>
        <dbReference type="ChEBI" id="CHEBI:57540"/>
    </ligand>
</feature>
<feature type="binding site" evidence="1">
    <location>
        <position position="176"/>
    </location>
    <ligand>
        <name>NAD(+)</name>
        <dbReference type="ChEBI" id="CHEBI:57540"/>
    </ligand>
</feature>
<feature type="binding site" evidence="1">
    <location>
        <position position="292"/>
    </location>
    <ligand>
        <name>NAD(+)</name>
        <dbReference type="ChEBI" id="CHEBI:57540"/>
    </ligand>
</feature>
<feature type="binding site" evidence="1">
    <location>
        <position position="316"/>
    </location>
    <ligand>
        <name>NAD(+)</name>
        <dbReference type="ChEBI" id="CHEBI:57540"/>
    </ligand>
</feature>
<feature type="binding site" evidence="1">
    <location>
        <position position="410"/>
    </location>
    <ligand>
        <name>Zn(2+)</name>
        <dbReference type="ChEBI" id="CHEBI:29105"/>
    </ligand>
</feature>
<feature type="binding site" evidence="1">
    <location>
        <position position="413"/>
    </location>
    <ligand>
        <name>Zn(2+)</name>
        <dbReference type="ChEBI" id="CHEBI:29105"/>
    </ligand>
</feature>
<feature type="binding site" evidence="1">
    <location>
        <position position="429"/>
    </location>
    <ligand>
        <name>Zn(2+)</name>
        <dbReference type="ChEBI" id="CHEBI:29105"/>
    </ligand>
</feature>
<feature type="binding site" evidence="1">
    <location>
        <position position="435"/>
    </location>
    <ligand>
        <name>Zn(2+)</name>
        <dbReference type="ChEBI" id="CHEBI:29105"/>
    </ligand>
</feature>
<keyword id="KW-0227">DNA damage</keyword>
<keyword id="KW-0234">DNA repair</keyword>
<keyword id="KW-0235">DNA replication</keyword>
<keyword id="KW-0436">Ligase</keyword>
<keyword id="KW-0460">Magnesium</keyword>
<keyword id="KW-0464">Manganese</keyword>
<keyword id="KW-0479">Metal-binding</keyword>
<keyword id="KW-0520">NAD</keyword>
<keyword id="KW-1185">Reference proteome</keyword>
<keyword id="KW-0862">Zinc</keyword>
<accession>B2HIF0</accession>
<proteinExistence type="inferred from homology"/>
<reference key="1">
    <citation type="journal article" date="2008" name="Genome Res.">
        <title>Insights from the complete genome sequence of Mycobacterium marinum on the evolution of Mycobacterium tuberculosis.</title>
        <authorList>
            <person name="Stinear T.P."/>
            <person name="Seemann T."/>
            <person name="Harrison P.F."/>
            <person name="Jenkin G.A."/>
            <person name="Davies J.K."/>
            <person name="Johnson P.D."/>
            <person name="Abdellah Z."/>
            <person name="Arrowsmith C."/>
            <person name="Chillingworth T."/>
            <person name="Churcher C."/>
            <person name="Clarke K."/>
            <person name="Cronin A."/>
            <person name="Davis P."/>
            <person name="Goodhead I."/>
            <person name="Holroyd N."/>
            <person name="Jagels K."/>
            <person name="Lord A."/>
            <person name="Moule S."/>
            <person name="Mungall K."/>
            <person name="Norbertczak H."/>
            <person name="Quail M.A."/>
            <person name="Rabbinowitsch E."/>
            <person name="Walker D."/>
            <person name="White B."/>
            <person name="Whitehead S."/>
            <person name="Small P.L."/>
            <person name="Brosch R."/>
            <person name="Ramakrishnan L."/>
            <person name="Fischbach M.A."/>
            <person name="Parkhill J."/>
            <person name="Cole S.T."/>
        </authorList>
    </citation>
    <scope>NUCLEOTIDE SEQUENCE [LARGE SCALE GENOMIC DNA]</scope>
    <source>
        <strain>ATCC BAA-535 / M</strain>
    </source>
</reference>
<evidence type="ECO:0000255" key="1">
    <source>
        <dbReference type="HAMAP-Rule" id="MF_01588"/>
    </source>
</evidence>
<gene>
    <name evidence="1" type="primary">ligA</name>
    <name type="ordered locus">MMAR_1694</name>
</gene>